<sequence>MAKEGLALEITELRLGLPGDNYSEISVCGSSKKKKRVLSDMMTSSALDTENENSVVSSVEDESLPVVKSQAVGWPPVCSYRRKKNNEEASKAIGYVKVSMDGVPYMRKIDLGSSNSYINLVTVLENLFGCLGIGVAKEGKKCEYIIIYEDKDRDWMLVGDVPWQMFKESCKRLRIVKRSDATGFGLQQD</sequence>
<dbReference type="EMBL" id="U18408">
    <property type="protein sequence ID" value="AAC49047.1"/>
    <property type="molecule type" value="mRNA"/>
</dbReference>
<dbReference type="EMBL" id="AC019018">
    <property type="protein sequence ID" value="AAG52268.1"/>
    <property type="molecule type" value="Genomic_DNA"/>
</dbReference>
<dbReference type="EMBL" id="CP002684">
    <property type="protein sequence ID" value="AEE32858.1"/>
    <property type="molecule type" value="Genomic_DNA"/>
</dbReference>
<dbReference type="EMBL" id="AF336915">
    <property type="protein sequence ID" value="AAG53996.1"/>
    <property type="molecule type" value="mRNA"/>
</dbReference>
<dbReference type="EMBL" id="AY085353">
    <property type="protein sequence ID" value="AAM62583.1"/>
    <property type="molecule type" value="mRNA"/>
</dbReference>
<dbReference type="PIR" id="E96569">
    <property type="entry name" value="E96569"/>
</dbReference>
<dbReference type="PIR" id="S58493">
    <property type="entry name" value="S58493"/>
</dbReference>
<dbReference type="RefSeq" id="NP_175692.1">
    <property type="nucleotide sequence ID" value="NM_104161.3"/>
</dbReference>
<dbReference type="SMR" id="Q38824"/>
<dbReference type="BioGRID" id="26942">
    <property type="interactions" value="41"/>
</dbReference>
<dbReference type="ELM" id="Q38824"/>
<dbReference type="FunCoup" id="Q38824">
    <property type="interactions" value="295"/>
</dbReference>
<dbReference type="IntAct" id="Q38824">
    <property type="interactions" value="41"/>
</dbReference>
<dbReference type="STRING" id="3702.Q38824"/>
<dbReference type="iPTMnet" id="Q38824"/>
<dbReference type="PaxDb" id="3702-AT1G52830.1"/>
<dbReference type="EnsemblPlants" id="AT1G52830.1">
    <property type="protein sequence ID" value="AT1G52830.1"/>
    <property type="gene ID" value="AT1G52830"/>
</dbReference>
<dbReference type="GeneID" id="841717"/>
<dbReference type="Gramene" id="AT1G52830.1">
    <property type="protein sequence ID" value="AT1G52830.1"/>
    <property type="gene ID" value="AT1G52830"/>
</dbReference>
<dbReference type="KEGG" id="ath:AT1G52830"/>
<dbReference type="Araport" id="AT1G52830"/>
<dbReference type="TAIR" id="AT1G52830">
    <property type="gene designation" value="IAA6"/>
</dbReference>
<dbReference type="eggNOG" id="ENOG502RXTN">
    <property type="taxonomic scope" value="Eukaryota"/>
</dbReference>
<dbReference type="HOGENOM" id="CLU_049393_0_1_1"/>
<dbReference type="InParanoid" id="Q38824"/>
<dbReference type="OMA" id="EMFKESC"/>
<dbReference type="OrthoDB" id="1926344at2759"/>
<dbReference type="PhylomeDB" id="Q38824"/>
<dbReference type="PRO" id="PR:Q38824"/>
<dbReference type="Proteomes" id="UP000006548">
    <property type="component" value="Chromosome 1"/>
</dbReference>
<dbReference type="ExpressionAtlas" id="Q38824">
    <property type="expression patterns" value="baseline and differential"/>
</dbReference>
<dbReference type="GO" id="GO:0005634">
    <property type="term" value="C:nucleus"/>
    <property type="evidence" value="ECO:0000250"/>
    <property type="project" value="TAIR"/>
</dbReference>
<dbReference type="GO" id="GO:0003700">
    <property type="term" value="F:DNA-binding transcription factor activity"/>
    <property type="evidence" value="ECO:0000250"/>
    <property type="project" value="TAIR"/>
</dbReference>
<dbReference type="GO" id="GO:0042802">
    <property type="term" value="F:identical protein binding"/>
    <property type="evidence" value="ECO:0000353"/>
    <property type="project" value="IntAct"/>
</dbReference>
<dbReference type="GO" id="GO:0000976">
    <property type="term" value="F:transcription cis-regulatory region binding"/>
    <property type="evidence" value="ECO:0000353"/>
    <property type="project" value="TAIR"/>
</dbReference>
<dbReference type="GO" id="GO:0009734">
    <property type="term" value="P:auxin-activated signaling pathway"/>
    <property type="evidence" value="ECO:0007669"/>
    <property type="project" value="UniProtKB-KW"/>
</dbReference>
<dbReference type="GO" id="GO:0009704">
    <property type="term" value="P:de-etiolation"/>
    <property type="evidence" value="ECO:0000315"/>
    <property type="project" value="TAIR"/>
</dbReference>
<dbReference type="GO" id="GO:0009733">
    <property type="term" value="P:response to auxin"/>
    <property type="evidence" value="ECO:0000315"/>
    <property type="project" value="TAIR"/>
</dbReference>
<dbReference type="FunFam" id="3.10.20.90:FF:000078">
    <property type="entry name" value="Auxin-responsive protein"/>
    <property type="match status" value="1"/>
</dbReference>
<dbReference type="Gene3D" id="3.10.20.90">
    <property type="entry name" value="Phosphatidylinositol 3-kinase Catalytic Subunit, Chain A, domain 1"/>
    <property type="match status" value="1"/>
</dbReference>
<dbReference type="InterPro" id="IPR033389">
    <property type="entry name" value="AUX/IAA_dom"/>
</dbReference>
<dbReference type="InterPro" id="IPR003311">
    <property type="entry name" value="AUX_IAA"/>
</dbReference>
<dbReference type="InterPro" id="IPR053793">
    <property type="entry name" value="PB1-like"/>
</dbReference>
<dbReference type="PANTHER" id="PTHR31734">
    <property type="entry name" value="AUXIN-RESPONSIVE PROTEIN IAA17"/>
    <property type="match status" value="1"/>
</dbReference>
<dbReference type="PANTHER" id="PTHR31734:SF241">
    <property type="entry name" value="AUXIN-RESPONSIVE PROTEIN IAA6"/>
    <property type="match status" value="1"/>
</dbReference>
<dbReference type="Pfam" id="PF02309">
    <property type="entry name" value="AUX_IAA"/>
    <property type="match status" value="1"/>
</dbReference>
<dbReference type="SUPFAM" id="SSF54277">
    <property type="entry name" value="CAD &amp; PB1 domains"/>
    <property type="match status" value="1"/>
</dbReference>
<dbReference type="PROSITE" id="PS51745">
    <property type="entry name" value="PB1"/>
    <property type="match status" value="1"/>
</dbReference>
<protein>
    <recommendedName>
        <fullName>Auxin-responsive protein IAA6</fullName>
    </recommendedName>
    <alternativeName>
        <fullName>Indoleacetic acid-induced protein 6</fullName>
    </alternativeName>
</protein>
<keyword id="KW-0927">Auxin signaling pathway</keyword>
<keyword id="KW-0539">Nucleus</keyword>
<keyword id="KW-1185">Reference proteome</keyword>
<keyword id="KW-0678">Repressor</keyword>
<keyword id="KW-0804">Transcription</keyword>
<keyword id="KW-0805">Transcription regulation</keyword>
<accession>Q38824</accession>
<accession>Q8LEM1</accession>
<accession>Q9C539</accession>
<reference key="1">
    <citation type="journal article" date="1995" name="J. Mol. Biol.">
        <title>The PS-IAA4/5-like family of early auxin-inducible mRNAs in Arabidopsis thaliana.</title>
        <authorList>
            <person name="Abel S."/>
            <person name="Nguyen M.D."/>
            <person name="Theologis A."/>
        </authorList>
    </citation>
    <scope>NUCLEOTIDE SEQUENCE [MRNA]</scope>
    <scope>TISSUE SPECIFICITY</scope>
    <scope>INDUCTION</scope>
    <source>
        <strain>cv. Columbia</strain>
    </source>
</reference>
<reference key="2">
    <citation type="journal article" date="2000" name="Nature">
        <title>Sequence and analysis of chromosome 1 of the plant Arabidopsis thaliana.</title>
        <authorList>
            <person name="Theologis A."/>
            <person name="Ecker J.R."/>
            <person name="Palm C.J."/>
            <person name="Federspiel N.A."/>
            <person name="Kaul S."/>
            <person name="White O."/>
            <person name="Alonso J."/>
            <person name="Altafi H."/>
            <person name="Araujo R."/>
            <person name="Bowman C.L."/>
            <person name="Brooks S.Y."/>
            <person name="Buehler E."/>
            <person name="Chan A."/>
            <person name="Chao Q."/>
            <person name="Chen H."/>
            <person name="Cheuk R.F."/>
            <person name="Chin C.W."/>
            <person name="Chung M.K."/>
            <person name="Conn L."/>
            <person name="Conway A.B."/>
            <person name="Conway A.R."/>
            <person name="Creasy T.H."/>
            <person name="Dewar K."/>
            <person name="Dunn P."/>
            <person name="Etgu P."/>
            <person name="Feldblyum T.V."/>
            <person name="Feng J.-D."/>
            <person name="Fong B."/>
            <person name="Fujii C.Y."/>
            <person name="Gill J.E."/>
            <person name="Goldsmith A.D."/>
            <person name="Haas B."/>
            <person name="Hansen N.F."/>
            <person name="Hughes B."/>
            <person name="Huizar L."/>
            <person name="Hunter J.L."/>
            <person name="Jenkins J."/>
            <person name="Johnson-Hopson C."/>
            <person name="Khan S."/>
            <person name="Khaykin E."/>
            <person name="Kim C.J."/>
            <person name="Koo H.L."/>
            <person name="Kremenetskaia I."/>
            <person name="Kurtz D.B."/>
            <person name="Kwan A."/>
            <person name="Lam B."/>
            <person name="Langin-Hooper S."/>
            <person name="Lee A."/>
            <person name="Lee J.M."/>
            <person name="Lenz C.A."/>
            <person name="Li J.H."/>
            <person name="Li Y.-P."/>
            <person name="Lin X."/>
            <person name="Liu S.X."/>
            <person name="Liu Z.A."/>
            <person name="Luros J.S."/>
            <person name="Maiti R."/>
            <person name="Marziali A."/>
            <person name="Militscher J."/>
            <person name="Miranda M."/>
            <person name="Nguyen M."/>
            <person name="Nierman W.C."/>
            <person name="Osborne B.I."/>
            <person name="Pai G."/>
            <person name="Peterson J."/>
            <person name="Pham P.K."/>
            <person name="Rizzo M."/>
            <person name="Rooney T."/>
            <person name="Rowley D."/>
            <person name="Sakano H."/>
            <person name="Salzberg S.L."/>
            <person name="Schwartz J.R."/>
            <person name="Shinn P."/>
            <person name="Southwick A.M."/>
            <person name="Sun H."/>
            <person name="Tallon L.J."/>
            <person name="Tambunga G."/>
            <person name="Toriumi M.J."/>
            <person name="Town C.D."/>
            <person name="Utterback T."/>
            <person name="Van Aken S."/>
            <person name="Vaysberg M."/>
            <person name="Vysotskaia V.S."/>
            <person name="Walker M."/>
            <person name="Wu D."/>
            <person name="Yu G."/>
            <person name="Fraser C.M."/>
            <person name="Venter J.C."/>
            <person name="Davis R.W."/>
        </authorList>
    </citation>
    <scope>NUCLEOTIDE SEQUENCE [LARGE SCALE GENOMIC DNA]</scope>
    <source>
        <strain>cv. Columbia</strain>
    </source>
</reference>
<reference key="3">
    <citation type="journal article" date="2017" name="Plant J.">
        <title>Araport11: a complete reannotation of the Arabidopsis thaliana reference genome.</title>
        <authorList>
            <person name="Cheng C.Y."/>
            <person name="Krishnakumar V."/>
            <person name="Chan A.P."/>
            <person name="Thibaud-Nissen F."/>
            <person name="Schobel S."/>
            <person name="Town C.D."/>
        </authorList>
    </citation>
    <scope>GENOME REANNOTATION</scope>
    <source>
        <strain>cv. Columbia</strain>
    </source>
</reference>
<reference key="4">
    <citation type="journal article" date="2003" name="Science">
        <title>Empirical analysis of transcriptional activity in the Arabidopsis genome.</title>
        <authorList>
            <person name="Yamada K."/>
            <person name="Lim J."/>
            <person name="Dale J.M."/>
            <person name="Chen H."/>
            <person name="Shinn P."/>
            <person name="Palm C.J."/>
            <person name="Southwick A.M."/>
            <person name="Wu H.C."/>
            <person name="Kim C.J."/>
            <person name="Nguyen M."/>
            <person name="Pham P.K."/>
            <person name="Cheuk R.F."/>
            <person name="Karlin-Newmann G."/>
            <person name="Liu S.X."/>
            <person name="Lam B."/>
            <person name="Sakano H."/>
            <person name="Wu T."/>
            <person name="Yu G."/>
            <person name="Miranda M."/>
            <person name="Quach H.L."/>
            <person name="Tripp M."/>
            <person name="Chang C.H."/>
            <person name="Lee J.M."/>
            <person name="Toriumi M.J."/>
            <person name="Chan M.M."/>
            <person name="Tang C.C."/>
            <person name="Onodera C.S."/>
            <person name="Deng J.M."/>
            <person name="Akiyama K."/>
            <person name="Ansari Y."/>
            <person name="Arakawa T."/>
            <person name="Banh J."/>
            <person name="Banno F."/>
            <person name="Bowser L."/>
            <person name="Brooks S.Y."/>
            <person name="Carninci P."/>
            <person name="Chao Q."/>
            <person name="Choy N."/>
            <person name="Enju A."/>
            <person name="Goldsmith A.D."/>
            <person name="Gurjal M."/>
            <person name="Hansen N.F."/>
            <person name="Hayashizaki Y."/>
            <person name="Johnson-Hopson C."/>
            <person name="Hsuan V.W."/>
            <person name="Iida K."/>
            <person name="Karnes M."/>
            <person name="Khan S."/>
            <person name="Koesema E."/>
            <person name="Ishida J."/>
            <person name="Jiang P.X."/>
            <person name="Jones T."/>
            <person name="Kawai J."/>
            <person name="Kamiya A."/>
            <person name="Meyers C."/>
            <person name="Nakajima M."/>
            <person name="Narusaka M."/>
            <person name="Seki M."/>
            <person name="Sakurai T."/>
            <person name="Satou M."/>
            <person name="Tamse R."/>
            <person name="Vaysberg M."/>
            <person name="Wallender E.K."/>
            <person name="Wong C."/>
            <person name="Yamamura Y."/>
            <person name="Yuan S."/>
            <person name="Shinozaki K."/>
            <person name="Davis R.W."/>
            <person name="Theologis A."/>
            <person name="Ecker J.R."/>
        </authorList>
    </citation>
    <scope>NUCLEOTIDE SEQUENCE [LARGE SCALE MRNA]</scope>
    <source>
        <strain>cv. Columbia</strain>
    </source>
</reference>
<reference key="5">
    <citation type="submission" date="2002-03" db="EMBL/GenBank/DDBJ databases">
        <title>Full-length cDNA from Arabidopsis thaliana.</title>
        <authorList>
            <person name="Brover V.V."/>
            <person name="Troukhan M.E."/>
            <person name="Alexandrov N.A."/>
            <person name="Lu Y.-P."/>
            <person name="Flavell R.B."/>
            <person name="Feldmann K.A."/>
        </authorList>
    </citation>
    <scope>NUCLEOTIDE SEQUENCE [LARGE SCALE MRNA]</scope>
</reference>
<reference key="6">
    <citation type="journal article" date="1996" name="Plant J.">
        <title>Two dominant photomorphogenic mutations of Arabidopsis thaliana identified as suppressor mutations of hy2.</title>
        <authorList>
            <person name="Kim B.C."/>
            <person name="Soh M.S."/>
            <person name="Kang B.J."/>
            <person name="Furuya M."/>
            <person name="Nam H.G."/>
        </authorList>
    </citation>
    <scope>MUTANT SHY1-1</scope>
</reference>
<reference key="7">
    <citation type="journal article" date="2002" name="Plant Mol. Biol.">
        <title>Genetics of Aux/IAA and ARF action in plant growth and development.</title>
        <authorList>
            <person name="Liscum E."/>
            <person name="Reed J.W."/>
        </authorList>
    </citation>
    <scope>GENE FAMILY</scope>
    <scope>NOMENCLATURE</scope>
    <scope>FUNCTION</scope>
</reference>
<reference key="8">
    <citation type="journal article" date="2004" name="Plant Cell">
        <title>Aux/IAA proteins contain a potent transcriptional repression domain.</title>
        <authorList>
            <person name="Tiwari S.B."/>
            <person name="Hagen G."/>
            <person name="Guilfoyle T.J."/>
        </authorList>
    </citation>
    <scope>TRANSCRIPTIONAL REPRESSION DOMAIN</scope>
</reference>
<reference key="9">
    <citation type="journal article" date="2008" name="Science">
        <title>TOPLESS mediates auxin-dependent transcriptional repression during Arabidopsis embryogenesis.</title>
        <authorList>
            <person name="Szemenyei H."/>
            <person name="Hannon M."/>
            <person name="Long J.A."/>
        </authorList>
    </citation>
    <scope>INTERACTION WITH TPL</scope>
</reference>
<comment type="function">
    <text evidence="3">Aux/IAA proteins are short-lived transcriptional factors that function as repressors of early auxin response genes at low auxin concentrations. Repression is thought to result from the interaction with auxin response factors (ARFs), proteins that bind to the auxin-responsive promoter element (AuxRE). Formation of heterodimers with ARF proteins may alter their ability to modulate early auxin response genes expression.</text>
</comment>
<comment type="subunit">
    <text evidence="1 4">Homodimers and heterodimers (By similarity). Interacts with TPL.</text>
</comment>
<comment type="interaction">
    <interactant intactId="EBI-1554124">
        <id>Q38824</id>
    </interactant>
    <interactant intactId="EBI-3946783">
        <id>Q9C5W9</id>
        <label>ARF18</label>
    </interactant>
    <organismsDiffer>false</organismsDiffer>
    <experiments>3</experiments>
</comment>
<comment type="interaction">
    <interactant intactId="EBI-1554124">
        <id>Q38824</id>
    </interactant>
    <interactant intactId="EBI-25523851">
        <id>Q9FIK2</id>
        <label>At5g47790</label>
    </interactant>
    <organismsDiffer>false</organismsDiffer>
    <experiments>3</experiments>
</comment>
<comment type="interaction">
    <interactant intactId="EBI-1554124">
        <id>Q38824</id>
    </interactant>
    <interactant intactId="EBI-630505">
        <id>P49677</id>
        <label>IAA1</label>
    </interactant>
    <organismsDiffer>false</organismsDiffer>
    <experiments>9</experiments>
</comment>
<comment type="interaction">
    <interactant intactId="EBI-1554124">
        <id>Q38824</id>
    </interactant>
    <interactant intactId="EBI-3946434">
        <id>Q38828</id>
        <label>IAA10</label>
    </interactant>
    <organismsDiffer>false</organismsDiffer>
    <experiments>9</experiments>
</comment>
<comment type="interaction">
    <interactant intactId="EBI-1554124">
        <id>Q38824</id>
    </interactant>
    <interactant intactId="EBI-2367923">
        <id>Q38829</id>
        <label>IAA11</label>
    </interactant>
    <organismsDiffer>false</organismsDiffer>
    <experiments>7</experiments>
</comment>
<comment type="interaction">
    <interactant intactId="EBI-1554124">
        <id>Q38824</id>
    </interactant>
    <interactant intactId="EBI-617608">
        <id>Q38830</id>
        <label>IAA12</label>
    </interactant>
    <organismsDiffer>false</organismsDiffer>
    <experiments>5</experiments>
</comment>
<comment type="interaction">
    <interactant intactId="EBI-1554124">
        <id>Q38824</id>
    </interactant>
    <interactant intactId="EBI-1554143">
        <id>Q38831</id>
        <label>IAA13</label>
    </interactant>
    <organismsDiffer>false</organismsDiffer>
    <experiments>8</experiments>
</comment>
<comment type="interaction">
    <interactant intactId="EBI-1554124">
        <id>Q38824</id>
    </interactant>
    <interactant intactId="EBI-25524519">
        <id>A0A2H1ZEF6</id>
        <label>IAA15</label>
    </interactant>
    <organismsDiffer>false</organismsDiffer>
    <experiments>5</experiments>
</comment>
<comment type="interaction">
    <interactant intactId="EBI-1554124">
        <id>Q38824</id>
    </interactant>
    <interactant intactId="EBI-632231">
        <id>O24407</id>
        <label>IAA16</label>
    </interactant>
    <organismsDiffer>false</organismsDiffer>
    <experiments>8</experiments>
</comment>
<comment type="interaction">
    <interactant intactId="EBI-1554124">
        <id>Q38824</id>
    </interactant>
    <interactant intactId="EBI-632243">
        <id>P93830</id>
        <label>IAA17</label>
    </interactant>
    <organismsDiffer>false</organismsDiffer>
    <experiments>8</experiments>
</comment>
<comment type="interaction">
    <interactant intactId="EBI-1554124">
        <id>Q38824</id>
    </interactant>
    <interactant intactId="EBI-2295525">
        <id>O24408</id>
        <label>IAA18</label>
    </interactant>
    <organismsDiffer>false</organismsDiffer>
    <experiments>3</experiments>
</comment>
<comment type="interaction">
    <interactant intactId="EBI-1554124">
        <id>Q38824</id>
    </interactant>
    <interactant intactId="EBI-632257">
        <id>O24409</id>
        <label>IAA19</label>
    </interactant>
    <organismsDiffer>false</organismsDiffer>
    <experiments>8</experiments>
</comment>
<comment type="interaction">
    <interactant intactId="EBI-1554124">
        <id>Q38824</id>
    </interactant>
    <interactant intactId="EBI-632343">
        <id>P49678</id>
        <label>IAA2</label>
    </interactant>
    <organismsDiffer>false</organismsDiffer>
    <experiments>7</experiments>
</comment>
<comment type="interaction">
    <interactant intactId="EBI-1554124">
        <id>Q38824</id>
    </interactant>
    <interactant intactId="EBI-632272">
        <id>O24410</id>
        <label>IAA20</label>
    </interactant>
    <organismsDiffer>false</organismsDiffer>
    <experiments>5</experiments>
</comment>
<comment type="interaction">
    <interactant intactId="EBI-1554124">
        <id>Q38824</id>
    </interactant>
    <interactant intactId="EBI-3947418">
        <id>Q8LAL2</id>
        <label>IAA26</label>
    </interactant>
    <organismsDiffer>false</organismsDiffer>
    <experiments>8</experiments>
</comment>
<comment type="interaction">
    <interactant intactId="EBI-1554124">
        <id>Q38824</id>
    </interactant>
    <interactant intactId="EBI-3946677">
        <id>Q9ZSY8</id>
        <label>IAA27</label>
    </interactant>
    <organismsDiffer>false</organismsDiffer>
    <experiments>9</experiments>
</comment>
<comment type="interaction">
    <interactant intactId="EBI-1554124">
        <id>Q38824</id>
    </interactant>
    <interactant intactId="EBI-3133404">
        <id>Q9XFM0</id>
        <label>IAA28</label>
    </interactant>
    <organismsDiffer>false</organismsDiffer>
    <experiments>9</experiments>
</comment>
<comment type="interaction">
    <interactant intactId="EBI-1554124">
        <id>Q38824</id>
    </interactant>
    <interactant intactId="EBI-307174">
        <id>Q38822</id>
        <label>IAA3</label>
    </interactant>
    <organismsDiffer>false</organismsDiffer>
    <experiments>8</experiments>
</comment>
<comment type="interaction">
    <interactant intactId="EBI-1554124">
        <id>Q38824</id>
    </interactant>
    <interactant intactId="EBI-3946408">
        <id>Q8H174</id>
        <label>IAA31</label>
    </interactant>
    <organismsDiffer>false</organismsDiffer>
    <experiments>9</experiments>
</comment>
<comment type="interaction">
    <interactant intactId="EBI-1554124">
        <id>Q38824</id>
    </interactant>
    <interactant intactId="EBI-3946448">
        <id>Q8RYC6</id>
        <label>IAA32</label>
    </interactant>
    <organismsDiffer>false</organismsDiffer>
    <experiments>3</experiments>
</comment>
<comment type="interaction">
    <interactant intactId="EBI-1554124">
        <id>Q38824</id>
    </interactant>
    <interactant intactId="EBI-3946739">
        <id>Q9FKM7</id>
        <label>IAA33</label>
    </interactant>
    <organismsDiffer>false</organismsDiffer>
    <experiments>5</experiments>
</comment>
<comment type="interaction">
    <interactant intactId="EBI-1554124">
        <id>Q38824</id>
    </interactant>
    <interactant intactId="EBI-3946459">
        <id>Q9C5X0</id>
        <label>IAA34</label>
    </interactant>
    <organismsDiffer>false</organismsDiffer>
    <experiments>8</experiments>
</comment>
<comment type="interaction">
    <interactant intactId="EBI-1554124">
        <id>Q38824</id>
    </interactant>
    <interactant intactId="EBI-632187">
        <id>P33077</id>
        <label>IAA4</label>
    </interactant>
    <organismsDiffer>false</organismsDiffer>
    <experiments>10</experiments>
</comment>
<comment type="interaction">
    <interactant intactId="EBI-1554124">
        <id>Q38824</id>
    </interactant>
    <interactant intactId="EBI-3946487">
        <id>P33078</id>
        <label>IAA5</label>
    </interactant>
    <organismsDiffer>false</organismsDiffer>
    <experiments>5</experiments>
</comment>
<comment type="interaction">
    <interactant intactId="EBI-1554124">
        <id>Q38824</id>
    </interactant>
    <interactant intactId="EBI-1554124">
        <id>Q38824</id>
        <label>IAA6</label>
    </interactant>
    <organismsDiffer>false</organismsDiffer>
    <experiments>4</experiments>
</comment>
<comment type="interaction">
    <interactant intactId="EBI-1554124">
        <id>Q38824</id>
    </interactant>
    <interactant intactId="EBI-632200">
        <id>Q38826</id>
        <label>IAA8</label>
    </interactant>
    <organismsDiffer>false</organismsDiffer>
    <experiments>5</experiments>
</comment>
<comment type="interaction">
    <interactant intactId="EBI-1554124">
        <id>Q38824</id>
    </interactant>
    <interactant intactId="EBI-632216">
        <id>Q38827</id>
        <label>IAA9</label>
    </interactant>
    <organismsDiffer>false</organismsDiffer>
    <experiments>3</experiments>
</comment>
<comment type="interaction">
    <interactant intactId="EBI-1554124">
        <id>Q38824</id>
    </interactant>
    <interactant intactId="EBI-15192835">
        <id>Q9XI84</id>
        <label>LSMT-L</label>
    </interactant>
    <organismsDiffer>false</organismsDiffer>
    <experiments>3</experiments>
</comment>
<comment type="interaction">
    <interactant intactId="EBI-1554124">
        <id>Q38824</id>
    </interactant>
    <interactant intactId="EBI-1238013">
        <id>O22179</id>
        <label>MYB70</label>
    </interactant>
    <organismsDiffer>false</organismsDiffer>
    <experiments>3</experiments>
</comment>
<comment type="interaction">
    <interactant intactId="EBI-1554124">
        <id>Q38824</id>
    </interactant>
    <interactant intactId="EBI-25506855">
        <id>O23160</id>
        <label>MYB73</label>
    </interactant>
    <organismsDiffer>false</organismsDiffer>
    <experiments>3</experiments>
</comment>
<comment type="interaction">
    <interactant intactId="EBI-1554124">
        <id>Q38824</id>
    </interactant>
    <interactant intactId="EBI-4426144">
        <id>Q9C9L2</id>
        <label>TCP15</label>
    </interactant>
    <organismsDiffer>false</organismsDiffer>
    <experiments>3</experiments>
</comment>
<comment type="interaction">
    <interactant intactId="EBI-1554124">
        <id>Q38824</id>
    </interactant>
    <interactant intactId="EBI-25522447">
        <id>Q9MAH8</id>
        <label>TCP3</label>
    </interactant>
    <organismsDiffer>false</organismsDiffer>
    <experiments>3</experiments>
</comment>
<comment type="subcellular location">
    <subcellularLocation>
        <location evidence="1">Nucleus</location>
    </subcellularLocation>
</comment>
<comment type="tissue specificity">
    <text evidence="5">Highly expressed in stems and flowers.</text>
</comment>
<comment type="induction">
    <text evidence="5">By auxin.</text>
</comment>
<comment type="domain">
    <text>The N-terminal half of the protein contains two conserved domains I and II. Domain I includes a slightly degenerated ERF-associated amphiphilic repression (EAR) motif which seems to be involved in the activity of transcriptional repression. Domain II is required for the correct degradation of the protein through the SCF-mediated ubiquitin-proteasome pathway. Interactions between Aux/IAA proteins and auxin response factors (ARFs) occur through their C-terminal dimerization domains III and IV.</text>
</comment>
<comment type="similarity">
    <text evidence="6">Belongs to the Aux/IAA family.</text>
</comment>
<name>IAA6_ARATH</name>
<proteinExistence type="evidence at protein level"/>
<gene>
    <name type="primary">IAA6</name>
    <name type="synonym">SHY1</name>
    <name type="ordered locus">At1g52830</name>
    <name type="ORF">F14G24.10</name>
</gene>
<organism>
    <name type="scientific">Arabidopsis thaliana</name>
    <name type="common">Mouse-ear cress</name>
    <dbReference type="NCBI Taxonomy" id="3702"/>
    <lineage>
        <taxon>Eukaryota</taxon>
        <taxon>Viridiplantae</taxon>
        <taxon>Streptophyta</taxon>
        <taxon>Embryophyta</taxon>
        <taxon>Tracheophyta</taxon>
        <taxon>Spermatophyta</taxon>
        <taxon>Magnoliopsida</taxon>
        <taxon>eudicotyledons</taxon>
        <taxon>Gunneridae</taxon>
        <taxon>Pentapetalae</taxon>
        <taxon>rosids</taxon>
        <taxon>malvids</taxon>
        <taxon>Brassicales</taxon>
        <taxon>Brassicaceae</taxon>
        <taxon>Camelineae</taxon>
        <taxon>Arabidopsis</taxon>
    </lineage>
</organism>
<evidence type="ECO:0000250" key="1"/>
<evidence type="ECO:0000255" key="2">
    <source>
        <dbReference type="PROSITE-ProRule" id="PRU01081"/>
    </source>
</evidence>
<evidence type="ECO:0000269" key="3">
    <source>
    </source>
</evidence>
<evidence type="ECO:0000269" key="4">
    <source>
    </source>
</evidence>
<evidence type="ECO:0000269" key="5">
    <source>
    </source>
</evidence>
<evidence type="ECO:0000305" key="6"/>
<feature type="chain" id="PRO_0000112837" description="Auxin-responsive protein IAA6">
    <location>
        <begin position="1"/>
        <end position="189"/>
    </location>
</feature>
<feature type="domain" description="PB1" evidence="2">
    <location>
        <begin position="93"/>
        <end position="178"/>
    </location>
</feature>
<feature type="short sequence motif" description="EAR-like (transcriptional repression)">
    <location>
        <begin position="13"/>
        <end position="17"/>
    </location>
</feature>
<feature type="mutagenesis site" description="In shy1-1; gain of function. Affects auxin-related developmental processes. Affects photomorphogenesis.">
    <original>C</original>
    <variation>R</variation>
    <location>
        <position position="78"/>
    </location>
</feature>
<feature type="sequence conflict" description="In Ref. 5; AAM62583." evidence="6" ref="5">
    <original>L</original>
    <variation>I</variation>
    <location>
        <position position="17"/>
    </location>
</feature>
<feature type="sequence conflict" description="In Ref. 5; AAM62583." evidence="6" ref="5">
    <original>V</original>
    <variation>I</variation>
    <location>
        <position position="27"/>
    </location>
</feature>
<feature type="sequence conflict" description="In Ref. 1; AAC49047." evidence="6" ref="1">
    <original>K</original>
    <variation>N</variation>
    <location>
        <position position="34"/>
    </location>
</feature>
<feature type="sequence conflict" description="In Ref. 5; AAM62583." evidence="6" ref="5">
    <original>A</original>
    <variation>S</variation>
    <location>
        <position position="46"/>
    </location>
</feature>
<feature type="sequence conflict" description="In Ref. 5; AAM62583." evidence="6" ref="5">
    <original>S</original>
    <variation>N</variation>
    <location>
        <position position="116"/>
    </location>
</feature>